<gene>
    <name type="primary">kin1</name>
    <name type="ORF">SPBC4F6.06</name>
</gene>
<feature type="chain" id="PRO_0000086130" description="Protein kinase kin1">
    <location>
        <begin position="1"/>
        <end position="891"/>
    </location>
</feature>
<feature type="domain" description="Protein kinase" evidence="1">
    <location>
        <begin position="125"/>
        <end position="395"/>
    </location>
</feature>
<feature type="domain" description="KA1" evidence="2">
    <location>
        <begin position="842"/>
        <end position="891"/>
    </location>
</feature>
<feature type="region of interest" description="Disordered" evidence="4">
    <location>
        <begin position="65"/>
        <end position="116"/>
    </location>
</feature>
<feature type="region of interest" description="Disordered" evidence="4">
    <location>
        <begin position="528"/>
        <end position="699"/>
    </location>
</feature>
<feature type="region of interest" description="Disordered" evidence="4">
    <location>
        <begin position="728"/>
        <end position="747"/>
    </location>
</feature>
<feature type="region of interest" description="Disordered" evidence="4">
    <location>
        <begin position="805"/>
        <end position="841"/>
    </location>
</feature>
<feature type="compositionally biased region" description="Low complexity" evidence="4">
    <location>
        <begin position="529"/>
        <end position="538"/>
    </location>
</feature>
<feature type="compositionally biased region" description="Low complexity" evidence="4">
    <location>
        <begin position="583"/>
        <end position="603"/>
    </location>
</feature>
<feature type="compositionally biased region" description="Polar residues" evidence="4">
    <location>
        <begin position="612"/>
        <end position="629"/>
    </location>
</feature>
<feature type="compositionally biased region" description="Polar residues" evidence="4">
    <location>
        <begin position="649"/>
        <end position="659"/>
    </location>
</feature>
<feature type="compositionally biased region" description="Polar residues" evidence="4">
    <location>
        <begin position="669"/>
        <end position="699"/>
    </location>
</feature>
<feature type="compositionally biased region" description="Polar residues" evidence="4">
    <location>
        <begin position="728"/>
        <end position="742"/>
    </location>
</feature>
<feature type="compositionally biased region" description="Polar residues" evidence="4">
    <location>
        <begin position="820"/>
        <end position="829"/>
    </location>
</feature>
<feature type="active site" description="Proton acceptor" evidence="1 3">
    <location>
        <position position="266"/>
    </location>
</feature>
<feature type="binding site" evidence="1">
    <location>
        <begin position="131"/>
        <end position="139"/>
    </location>
    <ligand>
        <name>ATP</name>
        <dbReference type="ChEBI" id="CHEBI:30616"/>
    </ligand>
</feature>
<feature type="binding site" evidence="1">
    <location>
        <position position="154"/>
    </location>
    <ligand>
        <name>ATP</name>
        <dbReference type="ChEBI" id="CHEBI:30616"/>
    </ligand>
</feature>
<feature type="modified residue" description="Phosphothreonine" evidence="6">
    <location>
        <position position="528"/>
    </location>
</feature>
<feature type="modified residue" description="Phosphoserine" evidence="6">
    <location>
        <position position="535"/>
    </location>
</feature>
<feature type="modified residue" description="Phosphoserine" evidence="6">
    <location>
        <position position="536"/>
    </location>
</feature>
<feature type="sequence conflict" description="In Ref. 1; AAA63577." evidence="7" ref="1">
    <original>V</original>
    <variation>D</variation>
    <location>
        <position position="141"/>
    </location>
</feature>
<feature type="sequence conflict" description="In Ref. 1; AAA63577." evidence="7" ref="1">
    <original>V</original>
    <variation>E</variation>
    <location>
        <position position="247"/>
    </location>
</feature>
<feature type="sequence conflict" description="In Ref. 1; AAA63577." evidence="7" ref="1">
    <original>I</original>
    <variation>N</variation>
    <location>
        <position position="620"/>
    </location>
</feature>
<feature type="sequence conflict" description="In Ref. 1; AAA63577." evidence="7" ref="1">
    <original>IR</original>
    <variation>ML</variation>
    <location>
        <begin position="777"/>
        <end position="778"/>
    </location>
</feature>
<sequence>MEYRTNNVPVGNETKSAALNALPKIKISDSPNRHHNLVDAFMQSPSYSTQPKSAVEPLGLSFSPGYISPSSQSPHHGPVRSPSSRKPLPASPSRTRDHSLRVPVSGHSYSADEKPRERRKVIGNYVLGKTIGAGSMGKVKVAHHLKTGEQFAIKIVTRLHPDITKAKAAASAEATKAAQSEKNKEIRTVREAALSTLLRHPYICEARDVYITNSHYYMVFEFVDGGQMLDYIISHGKLKEKQARKFVRQIGSALSYLHQNSVVHRDLKIENILISKTGDIKIIDFGLSNLYRRQSRLRTFCGSLYFAAPELLNAQPYIGPEVDVWSFGIVLYVLVCGKVPFDDQNMSALHAKIKKGTVEYPSYLSSDCKGLLSRMLVTDPLKRATLEEVLNHPWMIRNYEGPPASFAPERSPITLPLDPEIIREMNGFDFGPPEKIVRELTKVISSEAYQSLAKTGFYSGPNSADKKKSFFEFRIRHAAHDIENPILPSLSMNTDIYDAFHPLISIYYLVSERRVYEKGGNWNRIAKTPVSSVPSSPVQPTSYNRTLPPMPEVVAYKGDEESPRVSRNTSLARRKPLPDTESHSPSPSATSSIKKNPSSIFRRFSSRRKQNKSSTSTLQISAPLETSQSPPTPRTKPSHKPPVSYKNKLVTQSAIGRSTSVREGRYAGISSQMDSLNMDSTGPSASNMANAPPSVRNNRVLNPRGASLGHGRMSTSTTNRQKQILNETMGNPVDKNSTSPSKSTDKLDPIKPVFLKGLFSVSTTSTKSTESIQRDLIRVMGMLDIEYKEIKGGYACLYKPQGIRTPTKSTSVHTRRKPSYGSNSTTDSYGSVPDTVPLDDNGESPASNLAFEIYIVKVPILSLRGVSFHRISGNSWQYKTLASRILNELKL</sequence>
<reference key="1">
    <citation type="journal article" date="1990" name="Proc. Natl. Acad. Sci. U.S.A.">
        <title>A putative protein kinase gene (kin1+) is important for growth polarity in Schizosaccharomyces pombe.</title>
        <authorList>
            <person name="Levin D.E."/>
            <person name="Bishop J.M."/>
        </authorList>
    </citation>
    <scope>NUCLEOTIDE SEQUENCE [GENOMIC DNA]</scope>
</reference>
<reference key="2">
    <citation type="journal article" date="2002" name="Nature">
        <title>The genome sequence of Schizosaccharomyces pombe.</title>
        <authorList>
            <person name="Wood V."/>
            <person name="Gwilliam R."/>
            <person name="Rajandream M.A."/>
            <person name="Lyne M.H."/>
            <person name="Lyne R."/>
            <person name="Stewart A."/>
            <person name="Sgouros J.G."/>
            <person name="Peat N."/>
            <person name="Hayles J."/>
            <person name="Baker S.G."/>
            <person name="Basham D."/>
            <person name="Bowman S."/>
            <person name="Brooks K."/>
            <person name="Brown D."/>
            <person name="Brown S."/>
            <person name="Chillingworth T."/>
            <person name="Churcher C.M."/>
            <person name="Collins M."/>
            <person name="Connor R."/>
            <person name="Cronin A."/>
            <person name="Davis P."/>
            <person name="Feltwell T."/>
            <person name="Fraser A."/>
            <person name="Gentles S."/>
            <person name="Goble A."/>
            <person name="Hamlin N."/>
            <person name="Harris D.E."/>
            <person name="Hidalgo J."/>
            <person name="Hodgson G."/>
            <person name="Holroyd S."/>
            <person name="Hornsby T."/>
            <person name="Howarth S."/>
            <person name="Huckle E.J."/>
            <person name="Hunt S."/>
            <person name="Jagels K."/>
            <person name="James K.D."/>
            <person name="Jones L."/>
            <person name="Jones M."/>
            <person name="Leather S."/>
            <person name="McDonald S."/>
            <person name="McLean J."/>
            <person name="Mooney P."/>
            <person name="Moule S."/>
            <person name="Mungall K.L."/>
            <person name="Murphy L.D."/>
            <person name="Niblett D."/>
            <person name="Odell C."/>
            <person name="Oliver K."/>
            <person name="O'Neil S."/>
            <person name="Pearson D."/>
            <person name="Quail M.A."/>
            <person name="Rabbinowitsch E."/>
            <person name="Rutherford K.M."/>
            <person name="Rutter S."/>
            <person name="Saunders D."/>
            <person name="Seeger K."/>
            <person name="Sharp S."/>
            <person name="Skelton J."/>
            <person name="Simmonds M.N."/>
            <person name="Squares R."/>
            <person name="Squares S."/>
            <person name="Stevens K."/>
            <person name="Taylor K."/>
            <person name="Taylor R.G."/>
            <person name="Tivey A."/>
            <person name="Walsh S.V."/>
            <person name="Warren T."/>
            <person name="Whitehead S."/>
            <person name="Woodward J.R."/>
            <person name="Volckaert G."/>
            <person name="Aert R."/>
            <person name="Robben J."/>
            <person name="Grymonprez B."/>
            <person name="Weltjens I."/>
            <person name="Vanstreels E."/>
            <person name="Rieger M."/>
            <person name="Schaefer M."/>
            <person name="Mueller-Auer S."/>
            <person name="Gabel C."/>
            <person name="Fuchs M."/>
            <person name="Duesterhoeft A."/>
            <person name="Fritzc C."/>
            <person name="Holzer E."/>
            <person name="Moestl D."/>
            <person name="Hilbert H."/>
            <person name="Borzym K."/>
            <person name="Langer I."/>
            <person name="Beck A."/>
            <person name="Lehrach H."/>
            <person name="Reinhardt R."/>
            <person name="Pohl T.M."/>
            <person name="Eger P."/>
            <person name="Zimmermann W."/>
            <person name="Wedler H."/>
            <person name="Wambutt R."/>
            <person name="Purnelle B."/>
            <person name="Goffeau A."/>
            <person name="Cadieu E."/>
            <person name="Dreano S."/>
            <person name="Gloux S."/>
            <person name="Lelaure V."/>
            <person name="Mottier S."/>
            <person name="Galibert F."/>
            <person name="Aves S.J."/>
            <person name="Xiang Z."/>
            <person name="Hunt C."/>
            <person name="Moore K."/>
            <person name="Hurst S.M."/>
            <person name="Lucas M."/>
            <person name="Rochet M."/>
            <person name="Gaillardin C."/>
            <person name="Tallada V.A."/>
            <person name="Garzon A."/>
            <person name="Thode G."/>
            <person name="Daga R.R."/>
            <person name="Cruzado L."/>
            <person name="Jimenez J."/>
            <person name="Sanchez M."/>
            <person name="del Rey F."/>
            <person name="Benito J."/>
            <person name="Dominguez A."/>
            <person name="Revuelta J.L."/>
            <person name="Moreno S."/>
            <person name="Armstrong J."/>
            <person name="Forsburg S.L."/>
            <person name="Cerutti L."/>
            <person name="Lowe T."/>
            <person name="McCombie W.R."/>
            <person name="Paulsen I."/>
            <person name="Potashkin J."/>
            <person name="Shpakovski G.V."/>
            <person name="Ussery D."/>
            <person name="Barrell B.G."/>
            <person name="Nurse P."/>
        </authorList>
    </citation>
    <scope>NUCLEOTIDE SEQUENCE [LARGE SCALE GENOMIC DNA]</scope>
    <source>
        <strain>972 / ATCC 24843</strain>
    </source>
</reference>
<reference key="3">
    <citation type="journal article" date="2003" name="FEBS Lett.">
        <title>The protein kinase kin1, the fission yeast orthologue of mammalian MARK/PAR-1, localises to new cell ends after mitosis and is important for bipolar growth.</title>
        <authorList>
            <person name="Drewes G."/>
            <person name="Nurse P."/>
        </authorList>
    </citation>
    <scope>FUNCTION</scope>
    <scope>SUBCELLULAR LOCATION</scope>
</reference>
<reference key="4">
    <citation type="journal article" date="2008" name="J. Proteome Res.">
        <title>Phosphoproteome analysis of fission yeast.</title>
        <authorList>
            <person name="Wilson-Grady J.T."/>
            <person name="Villen J."/>
            <person name="Gygi S.P."/>
        </authorList>
    </citation>
    <scope>PHOSPHORYLATION [LARGE SCALE ANALYSIS] AT THR-528; SER-535 AND SER-536</scope>
    <scope>IDENTIFICATION BY MASS SPECTROMETRY</scope>
</reference>
<dbReference type="EC" id="2.7.11.1"/>
<dbReference type="EMBL" id="M64999">
    <property type="protein sequence ID" value="AAA63577.1"/>
    <property type="molecule type" value="Genomic_DNA"/>
</dbReference>
<dbReference type="EMBL" id="CU329671">
    <property type="protein sequence ID" value="CAA20726.1"/>
    <property type="molecule type" value="Genomic_DNA"/>
</dbReference>
<dbReference type="PIR" id="A38903">
    <property type="entry name" value="A38903"/>
</dbReference>
<dbReference type="PIR" id="T40503">
    <property type="entry name" value="T40503"/>
</dbReference>
<dbReference type="RefSeq" id="NP_596106.1">
    <property type="nucleotide sequence ID" value="NM_001022023.2"/>
</dbReference>
<dbReference type="SMR" id="P22987"/>
<dbReference type="BioGRID" id="277311">
    <property type="interactions" value="473"/>
</dbReference>
<dbReference type="FunCoup" id="P22987">
    <property type="interactions" value="157"/>
</dbReference>
<dbReference type="STRING" id="284812.P22987"/>
<dbReference type="iPTMnet" id="P22987"/>
<dbReference type="PaxDb" id="4896-SPBC4F6.06.1"/>
<dbReference type="EnsemblFungi" id="SPBC4F6.06.1">
    <property type="protein sequence ID" value="SPBC4F6.06.1:pep"/>
    <property type="gene ID" value="SPBC4F6.06"/>
</dbReference>
<dbReference type="GeneID" id="2540792"/>
<dbReference type="KEGG" id="spo:2540792"/>
<dbReference type="PomBase" id="SPBC4F6.06">
    <property type="gene designation" value="kin1"/>
</dbReference>
<dbReference type="VEuPathDB" id="FungiDB:SPBC4F6.06"/>
<dbReference type="eggNOG" id="KOG0583">
    <property type="taxonomic scope" value="Eukaryota"/>
</dbReference>
<dbReference type="HOGENOM" id="CLU_002664_0_2_1"/>
<dbReference type="InParanoid" id="P22987"/>
<dbReference type="OMA" id="NSADYRP"/>
<dbReference type="PhylomeDB" id="P22987"/>
<dbReference type="BRENDA" id="2.7.11.1">
    <property type="organism ID" value="5613"/>
</dbReference>
<dbReference type="Reactome" id="R-SPO-1632852">
    <property type="pathway name" value="Macroautophagy"/>
</dbReference>
<dbReference type="Reactome" id="R-SPO-380972">
    <property type="pathway name" value="Energy dependent regulation of mTOR by LKB1-AMPK"/>
</dbReference>
<dbReference type="Reactome" id="R-SPO-5628897">
    <property type="pathway name" value="TP53 Regulates Metabolic Genes"/>
</dbReference>
<dbReference type="PRO" id="PR:P22987"/>
<dbReference type="Proteomes" id="UP000002485">
    <property type="component" value="Chromosome II"/>
</dbReference>
<dbReference type="GO" id="GO:0051285">
    <property type="term" value="C:cell cortex of cell tip"/>
    <property type="evidence" value="ECO:0000314"/>
    <property type="project" value="PomBase"/>
</dbReference>
<dbReference type="GO" id="GO:1902716">
    <property type="term" value="C:cell cortex of growing cell tip"/>
    <property type="evidence" value="ECO:0000314"/>
    <property type="project" value="PomBase"/>
</dbReference>
<dbReference type="GO" id="GO:0140472">
    <property type="term" value="C:cell cortex of non-growing cell tip"/>
    <property type="evidence" value="ECO:0000314"/>
    <property type="project" value="PomBase"/>
</dbReference>
<dbReference type="GO" id="GO:0032153">
    <property type="term" value="C:cell division site"/>
    <property type="evidence" value="ECO:0000314"/>
    <property type="project" value="PomBase"/>
</dbReference>
<dbReference type="GO" id="GO:0051286">
    <property type="term" value="C:cell tip"/>
    <property type="evidence" value="ECO:0007005"/>
    <property type="project" value="PomBase"/>
</dbReference>
<dbReference type="GO" id="GO:0031097">
    <property type="term" value="C:medial cortex"/>
    <property type="evidence" value="ECO:0000314"/>
    <property type="project" value="PomBase"/>
</dbReference>
<dbReference type="GO" id="GO:0015630">
    <property type="term" value="C:microtubule cytoskeleton"/>
    <property type="evidence" value="ECO:0000304"/>
    <property type="project" value="PomBase"/>
</dbReference>
<dbReference type="GO" id="GO:0110085">
    <property type="term" value="C:mitotic actomyosin contractile ring"/>
    <property type="evidence" value="ECO:0000269"/>
    <property type="project" value="PomBase"/>
</dbReference>
<dbReference type="GO" id="GO:0035841">
    <property type="term" value="C:new growing cell tip"/>
    <property type="evidence" value="ECO:0000314"/>
    <property type="project" value="PomBase"/>
</dbReference>
<dbReference type="GO" id="GO:0035839">
    <property type="term" value="C:non-growing cell tip"/>
    <property type="evidence" value="ECO:0000314"/>
    <property type="project" value="PomBase"/>
</dbReference>
<dbReference type="GO" id="GO:0035842">
    <property type="term" value="C:old cell tip after activation of bipolar cell growth"/>
    <property type="evidence" value="ECO:0000314"/>
    <property type="project" value="PomBase"/>
</dbReference>
<dbReference type="GO" id="GO:0005524">
    <property type="term" value="F:ATP binding"/>
    <property type="evidence" value="ECO:0000255"/>
    <property type="project" value="PomBase"/>
</dbReference>
<dbReference type="GO" id="GO:0106310">
    <property type="term" value="F:protein serine kinase activity"/>
    <property type="evidence" value="ECO:0007669"/>
    <property type="project" value="RHEA"/>
</dbReference>
<dbReference type="GO" id="GO:0004674">
    <property type="term" value="F:protein serine/threonine kinase activity"/>
    <property type="evidence" value="ECO:0000314"/>
    <property type="project" value="PomBase"/>
</dbReference>
<dbReference type="GO" id="GO:0051523">
    <property type="term" value="P:cell growth mode switching, monopolar to bipolar"/>
    <property type="evidence" value="ECO:0000315"/>
    <property type="project" value="PomBase"/>
</dbReference>
<dbReference type="GO" id="GO:0030950">
    <property type="term" value="P:establishment or maintenance of actin cytoskeleton polarity"/>
    <property type="evidence" value="ECO:0000315"/>
    <property type="project" value="PomBase"/>
</dbReference>
<dbReference type="GO" id="GO:0007163">
    <property type="term" value="P:establishment or maintenance of cell polarity"/>
    <property type="evidence" value="ECO:0000315"/>
    <property type="project" value="PomBase"/>
</dbReference>
<dbReference type="GO" id="GO:1902408">
    <property type="term" value="P:mitotic cytokinesis, division site positioning"/>
    <property type="evidence" value="ECO:0000315"/>
    <property type="project" value="PomBase"/>
</dbReference>
<dbReference type="GO" id="GO:0007009">
    <property type="term" value="P:plasma membrane organization"/>
    <property type="evidence" value="ECO:0000315"/>
    <property type="project" value="PomBase"/>
</dbReference>
<dbReference type="GO" id="GO:1903617">
    <property type="term" value="P:positive regulation of mitotic cytokinesis, division site positioning"/>
    <property type="evidence" value="ECO:0000269"/>
    <property type="project" value="PomBase"/>
</dbReference>
<dbReference type="CDD" id="cd12121">
    <property type="entry name" value="MARK_C_like"/>
    <property type="match status" value="1"/>
</dbReference>
<dbReference type="CDD" id="cd14077">
    <property type="entry name" value="STKc_Kin1_2"/>
    <property type="match status" value="1"/>
</dbReference>
<dbReference type="FunFam" id="1.10.510.10:FF:000333">
    <property type="entry name" value="Non-specific serine/threonine protein kinase"/>
    <property type="match status" value="1"/>
</dbReference>
<dbReference type="Gene3D" id="3.30.310.80">
    <property type="entry name" value="Kinase associated domain 1, KA1"/>
    <property type="match status" value="1"/>
</dbReference>
<dbReference type="Gene3D" id="1.10.510.10">
    <property type="entry name" value="Transferase(Phosphotransferase) domain 1"/>
    <property type="match status" value="1"/>
</dbReference>
<dbReference type="InterPro" id="IPR028375">
    <property type="entry name" value="KA1/Ssp2_C"/>
</dbReference>
<dbReference type="InterPro" id="IPR001772">
    <property type="entry name" value="KA1_dom"/>
</dbReference>
<dbReference type="InterPro" id="IPR011009">
    <property type="entry name" value="Kinase-like_dom_sf"/>
</dbReference>
<dbReference type="InterPro" id="IPR000719">
    <property type="entry name" value="Prot_kinase_dom"/>
</dbReference>
<dbReference type="InterPro" id="IPR017441">
    <property type="entry name" value="Protein_kinase_ATP_BS"/>
</dbReference>
<dbReference type="InterPro" id="IPR008271">
    <property type="entry name" value="Ser/Thr_kinase_AS"/>
</dbReference>
<dbReference type="PANTHER" id="PTHR24346:SF82">
    <property type="entry name" value="KP78A-RELATED"/>
    <property type="match status" value="1"/>
</dbReference>
<dbReference type="PANTHER" id="PTHR24346">
    <property type="entry name" value="MAP/MICROTUBULE AFFINITY-REGULATING KINASE"/>
    <property type="match status" value="1"/>
</dbReference>
<dbReference type="Pfam" id="PF02149">
    <property type="entry name" value="KA1"/>
    <property type="match status" value="1"/>
</dbReference>
<dbReference type="Pfam" id="PF00069">
    <property type="entry name" value="Pkinase"/>
    <property type="match status" value="1"/>
</dbReference>
<dbReference type="SMART" id="SM00220">
    <property type="entry name" value="S_TKc"/>
    <property type="match status" value="1"/>
</dbReference>
<dbReference type="SUPFAM" id="SSF103243">
    <property type="entry name" value="KA1-like"/>
    <property type="match status" value="1"/>
</dbReference>
<dbReference type="SUPFAM" id="SSF56112">
    <property type="entry name" value="Protein kinase-like (PK-like)"/>
    <property type="match status" value="1"/>
</dbReference>
<dbReference type="PROSITE" id="PS50032">
    <property type="entry name" value="KA1"/>
    <property type="match status" value="1"/>
</dbReference>
<dbReference type="PROSITE" id="PS00107">
    <property type="entry name" value="PROTEIN_KINASE_ATP"/>
    <property type="match status" value="1"/>
</dbReference>
<dbReference type="PROSITE" id="PS50011">
    <property type="entry name" value="PROTEIN_KINASE_DOM"/>
    <property type="match status" value="1"/>
</dbReference>
<dbReference type="PROSITE" id="PS00108">
    <property type="entry name" value="PROTEIN_KINASE_ST"/>
    <property type="match status" value="1"/>
</dbReference>
<protein>
    <recommendedName>
        <fullName>Protein kinase kin1</fullName>
        <ecNumber>2.7.11.1</ecNumber>
    </recommendedName>
</protein>
<name>KIN1_SCHPO</name>
<proteinExistence type="evidence at protein level"/>
<accession>P22987</accession>
<accession>O74392</accession>
<keyword id="KW-0067">ATP-binding</keyword>
<keyword id="KW-0963">Cytoplasm</keyword>
<keyword id="KW-0418">Kinase</keyword>
<keyword id="KW-0547">Nucleotide-binding</keyword>
<keyword id="KW-0597">Phosphoprotein</keyword>
<keyword id="KW-1185">Reference proteome</keyword>
<keyword id="KW-0723">Serine/threonine-protein kinase</keyword>
<keyword id="KW-0808">Transferase</keyword>
<comment type="function">
    <text evidence="5">Has a role in establishing the characteristic rod cell shape. Important for cell polarity and is involved in directing growth to the cell ends.</text>
</comment>
<comment type="catalytic activity">
    <reaction>
        <text>L-seryl-[protein] + ATP = O-phospho-L-seryl-[protein] + ADP + H(+)</text>
        <dbReference type="Rhea" id="RHEA:17989"/>
        <dbReference type="Rhea" id="RHEA-COMP:9863"/>
        <dbReference type="Rhea" id="RHEA-COMP:11604"/>
        <dbReference type="ChEBI" id="CHEBI:15378"/>
        <dbReference type="ChEBI" id="CHEBI:29999"/>
        <dbReference type="ChEBI" id="CHEBI:30616"/>
        <dbReference type="ChEBI" id="CHEBI:83421"/>
        <dbReference type="ChEBI" id="CHEBI:456216"/>
        <dbReference type="EC" id="2.7.11.1"/>
    </reaction>
</comment>
<comment type="catalytic activity">
    <reaction>
        <text>L-threonyl-[protein] + ATP = O-phospho-L-threonyl-[protein] + ADP + H(+)</text>
        <dbReference type="Rhea" id="RHEA:46608"/>
        <dbReference type="Rhea" id="RHEA-COMP:11060"/>
        <dbReference type="Rhea" id="RHEA-COMP:11605"/>
        <dbReference type="ChEBI" id="CHEBI:15378"/>
        <dbReference type="ChEBI" id="CHEBI:30013"/>
        <dbReference type="ChEBI" id="CHEBI:30616"/>
        <dbReference type="ChEBI" id="CHEBI:61977"/>
        <dbReference type="ChEBI" id="CHEBI:456216"/>
        <dbReference type="EC" id="2.7.11.1"/>
    </reaction>
</comment>
<comment type="subcellular location">
    <subcellularLocation>
        <location evidence="5">Cytoplasm</location>
    </subcellularLocation>
    <text>Localized to the cell tips except during mitosis.</text>
</comment>
<comment type="similarity">
    <text evidence="1">Belongs to the protein kinase superfamily. Ser/Thr protein kinase family.</text>
</comment>
<evidence type="ECO:0000255" key="1">
    <source>
        <dbReference type="PROSITE-ProRule" id="PRU00159"/>
    </source>
</evidence>
<evidence type="ECO:0000255" key="2">
    <source>
        <dbReference type="PROSITE-ProRule" id="PRU00565"/>
    </source>
</evidence>
<evidence type="ECO:0000255" key="3">
    <source>
        <dbReference type="PROSITE-ProRule" id="PRU10027"/>
    </source>
</evidence>
<evidence type="ECO:0000256" key="4">
    <source>
        <dbReference type="SAM" id="MobiDB-lite"/>
    </source>
</evidence>
<evidence type="ECO:0000269" key="5">
    <source>
    </source>
</evidence>
<evidence type="ECO:0000269" key="6">
    <source>
    </source>
</evidence>
<evidence type="ECO:0000305" key="7"/>
<organism>
    <name type="scientific">Schizosaccharomyces pombe (strain 972 / ATCC 24843)</name>
    <name type="common">Fission yeast</name>
    <dbReference type="NCBI Taxonomy" id="284812"/>
    <lineage>
        <taxon>Eukaryota</taxon>
        <taxon>Fungi</taxon>
        <taxon>Dikarya</taxon>
        <taxon>Ascomycota</taxon>
        <taxon>Taphrinomycotina</taxon>
        <taxon>Schizosaccharomycetes</taxon>
        <taxon>Schizosaccharomycetales</taxon>
        <taxon>Schizosaccharomycetaceae</taxon>
        <taxon>Schizosaccharomyces</taxon>
    </lineage>
</organism>